<sequence length="39" mass="4424">MTIDRTYPIFTVRWLAVHGLAVPTVSFLGSISAMQFIQR</sequence>
<proteinExistence type="inferred from homology"/>
<comment type="function">
    <text evidence="1">This b-type cytochrome is tightly associated with the reaction center of photosystem II (PSII). PSII is a light-driven water:plastoquinone oxidoreductase that uses light energy to abstract electrons from H(2)O, generating O(2) and a proton gradient subsequently used for ATP formation. It consists of a core antenna complex that captures photons, and an electron transfer chain that converts photonic excitation into a charge separation.</text>
</comment>
<comment type="cofactor">
    <cofactor evidence="1">
        <name>heme b</name>
        <dbReference type="ChEBI" id="CHEBI:60344"/>
    </cofactor>
    <text evidence="1">With its partner (PsbE) binds heme. PSII binds additional chlorophylls, carotenoids and specific lipids.</text>
</comment>
<comment type="subunit">
    <text evidence="1">Heterodimer of an alpha subunit and a beta subunit. PSII is composed of 1 copy each of membrane proteins PsbA, PsbB, PsbC, PsbD, PsbE, PsbF, PsbH, PsbI, PsbJ, PsbK, PsbL, PsbM, PsbT, PsbX, PsbY, PsbZ, Psb30/Ycf12, at least 3 peripheral proteins of the oxygen-evolving complex and a large number of cofactors. It forms dimeric complexes.</text>
</comment>
<comment type="subcellular location">
    <subcellularLocation>
        <location evidence="1">Plastid</location>
        <location evidence="1">Chloroplast thylakoid membrane</location>
        <topology evidence="1">Single-pass membrane protein</topology>
    </subcellularLocation>
</comment>
<comment type="similarity">
    <text evidence="1">Belongs to the PsbE/PsbF family.</text>
</comment>
<organism>
    <name type="scientific">Citrus sinensis</name>
    <name type="common">Sweet orange</name>
    <name type="synonym">Citrus aurantium var. sinensis</name>
    <dbReference type="NCBI Taxonomy" id="2711"/>
    <lineage>
        <taxon>Eukaryota</taxon>
        <taxon>Viridiplantae</taxon>
        <taxon>Streptophyta</taxon>
        <taxon>Embryophyta</taxon>
        <taxon>Tracheophyta</taxon>
        <taxon>Spermatophyta</taxon>
        <taxon>Magnoliopsida</taxon>
        <taxon>eudicotyledons</taxon>
        <taxon>Gunneridae</taxon>
        <taxon>Pentapetalae</taxon>
        <taxon>rosids</taxon>
        <taxon>malvids</taxon>
        <taxon>Sapindales</taxon>
        <taxon>Rutaceae</taxon>
        <taxon>Aurantioideae</taxon>
        <taxon>Citrus</taxon>
    </lineage>
</organism>
<feature type="chain" id="PRO_0000275726" description="Cytochrome b559 subunit beta">
    <location>
        <begin position="1"/>
        <end position="39"/>
    </location>
</feature>
<feature type="transmembrane region" description="Helical" evidence="1">
    <location>
        <begin position="14"/>
        <end position="30"/>
    </location>
</feature>
<feature type="binding site" description="axial binding residue" evidence="1">
    <location>
        <position position="18"/>
    </location>
    <ligand>
        <name>heme</name>
        <dbReference type="ChEBI" id="CHEBI:30413"/>
        <note>ligand shared with alpha subunit</note>
    </ligand>
    <ligandPart>
        <name>Fe</name>
        <dbReference type="ChEBI" id="CHEBI:18248"/>
    </ligandPart>
</feature>
<evidence type="ECO:0000255" key="1">
    <source>
        <dbReference type="HAMAP-Rule" id="MF_00643"/>
    </source>
</evidence>
<dbReference type="EMBL" id="DQ864733">
    <property type="protein sequence ID" value="ABI49036.1"/>
    <property type="molecule type" value="Genomic_DNA"/>
</dbReference>
<dbReference type="RefSeq" id="YP_740491.1">
    <property type="nucleotide sequence ID" value="NC_008334.1"/>
</dbReference>
<dbReference type="SMR" id="Q09MG2"/>
<dbReference type="GeneID" id="4271221"/>
<dbReference type="KEGG" id="cit:4271221"/>
<dbReference type="OrthoDB" id="438036at71240"/>
<dbReference type="GO" id="GO:0009535">
    <property type="term" value="C:chloroplast thylakoid membrane"/>
    <property type="evidence" value="ECO:0007669"/>
    <property type="project" value="UniProtKB-SubCell"/>
</dbReference>
<dbReference type="GO" id="GO:0009539">
    <property type="term" value="C:photosystem II reaction center"/>
    <property type="evidence" value="ECO:0007669"/>
    <property type="project" value="InterPro"/>
</dbReference>
<dbReference type="GO" id="GO:0009055">
    <property type="term" value="F:electron transfer activity"/>
    <property type="evidence" value="ECO:0007669"/>
    <property type="project" value="UniProtKB-UniRule"/>
</dbReference>
<dbReference type="GO" id="GO:0020037">
    <property type="term" value="F:heme binding"/>
    <property type="evidence" value="ECO:0007669"/>
    <property type="project" value="InterPro"/>
</dbReference>
<dbReference type="GO" id="GO:0005506">
    <property type="term" value="F:iron ion binding"/>
    <property type="evidence" value="ECO:0007669"/>
    <property type="project" value="UniProtKB-UniRule"/>
</dbReference>
<dbReference type="GO" id="GO:0009767">
    <property type="term" value="P:photosynthetic electron transport chain"/>
    <property type="evidence" value="ECO:0007669"/>
    <property type="project" value="InterPro"/>
</dbReference>
<dbReference type="HAMAP" id="MF_00643">
    <property type="entry name" value="PSII_PsbF"/>
    <property type="match status" value="1"/>
</dbReference>
<dbReference type="InterPro" id="IPR006241">
    <property type="entry name" value="PSII_cyt_b559_bsu"/>
</dbReference>
<dbReference type="InterPro" id="IPR006216">
    <property type="entry name" value="PSII_cyt_b559_CS"/>
</dbReference>
<dbReference type="InterPro" id="IPR013081">
    <property type="entry name" value="PSII_cyt_b559_N"/>
</dbReference>
<dbReference type="NCBIfam" id="TIGR01333">
    <property type="entry name" value="cyt_b559_beta"/>
    <property type="match status" value="1"/>
</dbReference>
<dbReference type="Pfam" id="PF00283">
    <property type="entry name" value="Cytochrom_B559"/>
    <property type="match status" value="1"/>
</dbReference>
<dbReference type="PIRSF" id="PIRSF000037">
    <property type="entry name" value="PsbF"/>
    <property type="match status" value="1"/>
</dbReference>
<dbReference type="SUPFAM" id="SSF161045">
    <property type="entry name" value="Cytochrome b559 subunits"/>
    <property type="match status" value="1"/>
</dbReference>
<dbReference type="PROSITE" id="PS00537">
    <property type="entry name" value="CYTOCHROME_B559"/>
    <property type="match status" value="1"/>
</dbReference>
<geneLocation type="chloroplast"/>
<accession>Q09MG2</accession>
<protein>
    <recommendedName>
        <fullName evidence="1">Cytochrome b559 subunit beta</fullName>
    </recommendedName>
    <alternativeName>
        <fullName evidence="1">PSII reaction center subunit VI</fullName>
    </alternativeName>
</protein>
<name>PSBF_CITSI</name>
<keyword id="KW-0150">Chloroplast</keyword>
<keyword id="KW-0249">Electron transport</keyword>
<keyword id="KW-0349">Heme</keyword>
<keyword id="KW-0408">Iron</keyword>
<keyword id="KW-0472">Membrane</keyword>
<keyword id="KW-0479">Metal-binding</keyword>
<keyword id="KW-0602">Photosynthesis</keyword>
<keyword id="KW-0604">Photosystem II</keyword>
<keyword id="KW-0934">Plastid</keyword>
<keyword id="KW-0793">Thylakoid</keyword>
<keyword id="KW-0812">Transmembrane</keyword>
<keyword id="KW-1133">Transmembrane helix</keyword>
<keyword id="KW-0813">Transport</keyword>
<gene>
    <name evidence="1" type="primary">psbF</name>
</gene>
<reference key="1">
    <citation type="journal article" date="2006" name="BMC Plant Biol.">
        <title>The complete chloroplast genome sequence of Citrus sinensis (L.) Osbeck var 'Ridge Pineapple': organization and phylogenetic relationships to other angiosperms.</title>
        <authorList>
            <person name="Bausher M.G."/>
            <person name="Singh N.D."/>
            <person name="Lee S.-B."/>
            <person name="Jansen R.K."/>
            <person name="Daniell H."/>
        </authorList>
    </citation>
    <scope>NUCLEOTIDE SEQUENCE [LARGE SCALE GENOMIC DNA]</scope>
    <source>
        <strain>cv. Osbeck var. Ridge Pineapple</strain>
    </source>
</reference>